<protein>
    <recommendedName>
        <fullName evidence="1">Octanoyltransferase</fullName>
        <ecNumber evidence="1">2.3.1.181</ecNumber>
    </recommendedName>
    <alternativeName>
        <fullName evidence="1">Lipoate-protein ligase B</fullName>
    </alternativeName>
    <alternativeName>
        <fullName evidence="1">Lipoyl/octanoyl transferase</fullName>
    </alternativeName>
    <alternativeName>
        <fullName evidence="1">Octanoyl-[acyl-carrier-protein]-protein N-octanoyltransferase</fullName>
    </alternativeName>
</protein>
<name>LIPB_ZYMMO</name>
<reference key="1">
    <citation type="journal article" date="2005" name="Nat. Biotechnol.">
        <title>The genome sequence of the ethanologenic bacterium Zymomonas mobilis ZM4.</title>
        <authorList>
            <person name="Seo J.-S."/>
            <person name="Chong H."/>
            <person name="Park H.S."/>
            <person name="Yoon K.-O."/>
            <person name="Jung C."/>
            <person name="Kim J.J."/>
            <person name="Hong J.H."/>
            <person name="Kim H."/>
            <person name="Kim J.-H."/>
            <person name="Kil J.-I."/>
            <person name="Park C.J."/>
            <person name="Oh H.-M."/>
            <person name="Lee J.-S."/>
            <person name="Jin S.-J."/>
            <person name="Um H.-W."/>
            <person name="Lee H.-J."/>
            <person name="Oh S.-J."/>
            <person name="Kim J.Y."/>
            <person name="Kang H.L."/>
            <person name="Lee S.Y."/>
            <person name="Lee K.J."/>
            <person name="Kang H.S."/>
        </authorList>
    </citation>
    <scope>NUCLEOTIDE SEQUENCE [LARGE SCALE GENOMIC DNA]</scope>
    <source>
        <strain>ATCC 31821 / ZM4 / CP4</strain>
    </source>
</reference>
<dbReference type="EC" id="2.3.1.181" evidence="1"/>
<dbReference type="EMBL" id="AE008692">
    <property type="protein sequence ID" value="AAV89926.1"/>
    <property type="molecule type" value="Genomic_DNA"/>
</dbReference>
<dbReference type="RefSeq" id="WP_011241104.1">
    <property type="nucleotide sequence ID" value="NZ_CP035711.1"/>
</dbReference>
<dbReference type="SMR" id="Q5NMY4"/>
<dbReference type="STRING" id="264203.ZMO1302"/>
<dbReference type="KEGG" id="zmo:ZMO1302"/>
<dbReference type="eggNOG" id="COG0321">
    <property type="taxonomic scope" value="Bacteria"/>
</dbReference>
<dbReference type="HOGENOM" id="CLU_035168_3_0_5"/>
<dbReference type="UniPathway" id="UPA00538">
    <property type="reaction ID" value="UER00592"/>
</dbReference>
<dbReference type="Proteomes" id="UP000001173">
    <property type="component" value="Chromosome"/>
</dbReference>
<dbReference type="GO" id="GO:0005737">
    <property type="term" value="C:cytoplasm"/>
    <property type="evidence" value="ECO:0007669"/>
    <property type="project" value="UniProtKB-SubCell"/>
</dbReference>
<dbReference type="GO" id="GO:0033819">
    <property type="term" value="F:lipoyl(octanoyl) transferase activity"/>
    <property type="evidence" value="ECO:0007669"/>
    <property type="project" value="UniProtKB-EC"/>
</dbReference>
<dbReference type="GO" id="GO:0036211">
    <property type="term" value="P:protein modification process"/>
    <property type="evidence" value="ECO:0007669"/>
    <property type="project" value="InterPro"/>
</dbReference>
<dbReference type="CDD" id="cd16444">
    <property type="entry name" value="LipB"/>
    <property type="match status" value="1"/>
</dbReference>
<dbReference type="Gene3D" id="3.30.930.10">
    <property type="entry name" value="Bira Bifunctional Protein, Domain 2"/>
    <property type="match status" value="1"/>
</dbReference>
<dbReference type="HAMAP" id="MF_00013">
    <property type="entry name" value="LipB"/>
    <property type="match status" value="1"/>
</dbReference>
<dbReference type="InterPro" id="IPR045864">
    <property type="entry name" value="aa-tRNA-synth_II/BPL/LPL"/>
</dbReference>
<dbReference type="InterPro" id="IPR004143">
    <property type="entry name" value="BPL_LPL_catalytic"/>
</dbReference>
<dbReference type="InterPro" id="IPR000544">
    <property type="entry name" value="Octanoyltransferase"/>
</dbReference>
<dbReference type="InterPro" id="IPR020605">
    <property type="entry name" value="Octanoyltransferase_CS"/>
</dbReference>
<dbReference type="NCBIfam" id="TIGR00214">
    <property type="entry name" value="lipB"/>
    <property type="match status" value="1"/>
</dbReference>
<dbReference type="NCBIfam" id="NF010921">
    <property type="entry name" value="PRK14341.1"/>
    <property type="match status" value="1"/>
</dbReference>
<dbReference type="NCBIfam" id="NF010925">
    <property type="entry name" value="PRK14345.1"/>
    <property type="match status" value="1"/>
</dbReference>
<dbReference type="PANTHER" id="PTHR10993:SF7">
    <property type="entry name" value="LIPOYLTRANSFERASE 2, MITOCHONDRIAL-RELATED"/>
    <property type="match status" value="1"/>
</dbReference>
<dbReference type="PANTHER" id="PTHR10993">
    <property type="entry name" value="OCTANOYLTRANSFERASE"/>
    <property type="match status" value="1"/>
</dbReference>
<dbReference type="Pfam" id="PF21948">
    <property type="entry name" value="LplA-B_cat"/>
    <property type="match status" value="1"/>
</dbReference>
<dbReference type="PIRSF" id="PIRSF016262">
    <property type="entry name" value="LPLase"/>
    <property type="match status" value="1"/>
</dbReference>
<dbReference type="SUPFAM" id="SSF55681">
    <property type="entry name" value="Class II aaRS and biotin synthetases"/>
    <property type="match status" value="1"/>
</dbReference>
<dbReference type="PROSITE" id="PS51733">
    <property type="entry name" value="BPL_LPL_CATALYTIC"/>
    <property type="match status" value="1"/>
</dbReference>
<dbReference type="PROSITE" id="PS01313">
    <property type="entry name" value="LIPB"/>
    <property type="match status" value="1"/>
</dbReference>
<comment type="function">
    <text evidence="1">Catalyzes the transfer of endogenously produced octanoic acid from octanoyl-acyl-carrier-protein onto the lipoyl domains of lipoate-dependent enzymes. Lipoyl-ACP can also act as a substrate although octanoyl-ACP is likely to be the physiological substrate.</text>
</comment>
<comment type="catalytic activity">
    <reaction evidence="1">
        <text>octanoyl-[ACP] + L-lysyl-[protein] = N(6)-octanoyl-L-lysyl-[protein] + holo-[ACP] + H(+)</text>
        <dbReference type="Rhea" id="RHEA:17665"/>
        <dbReference type="Rhea" id="RHEA-COMP:9636"/>
        <dbReference type="Rhea" id="RHEA-COMP:9685"/>
        <dbReference type="Rhea" id="RHEA-COMP:9752"/>
        <dbReference type="Rhea" id="RHEA-COMP:9928"/>
        <dbReference type="ChEBI" id="CHEBI:15378"/>
        <dbReference type="ChEBI" id="CHEBI:29969"/>
        <dbReference type="ChEBI" id="CHEBI:64479"/>
        <dbReference type="ChEBI" id="CHEBI:78463"/>
        <dbReference type="ChEBI" id="CHEBI:78809"/>
        <dbReference type="EC" id="2.3.1.181"/>
    </reaction>
</comment>
<comment type="pathway">
    <text evidence="1">Protein modification; protein lipoylation via endogenous pathway; protein N(6)-(lipoyl)lysine from octanoyl-[acyl-carrier-protein]: step 1/2.</text>
</comment>
<comment type="subcellular location">
    <subcellularLocation>
        <location evidence="1">Cytoplasm</location>
    </subcellularLocation>
</comment>
<comment type="miscellaneous">
    <text evidence="1">In the reaction, the free carboxyl group of octanoic acid is attached via an amide linkage to the epsilon-amino group of a specific lysine residue of lipoyl domains of lipoate-dependent enzymes.</text>
</comment>
<comment type="similarity">
    <text evidence="1">Belongs to the LipB family.</text>
</comment>
<keyword id="KW-0012">Acyltransferase</keyword>
<keyword id="KW-0963">Cytoplasm</keyword>
<keyword id="KW-1185">Reference proteome</keyword>
<keyword id="KW-0808">Transferase</keyword>
<feature type="chain" id="PRO_0000242785" description="Octanoyltransferase">
    <location>
        <begin position="1"/>
        <end position="216"/>
    </location>
</feature>
<feature type="domain" description="BPL/LPL catalytic" evidence="2">
    <location>
        <begin position="32"/>
        <end position="211"/>
    </location>
</feature>
<feature type="active site" description="Acyl-thioester intermediate" evidence="1">
    <location>
        <position position="173"/>
    </location>
</feature>
<feature type="binding site" evidence="1">
    <location>
        <begin position="71"/>
        <end position="78"/>
    </location>
    <ligand>
        <name>substrate</name>
    </ligand>
</feature>
<feature type="binding site" evidence="1">
    <location>
        <begin position="142"/>
        <end position="144"/>
    </location>
    <ligand>
        <name>substrate</name>
    </ligand>
</feature>
<feature type="binding site" evidence="1">
    <location>
        <begin position="155"/>
        <end position="157"/>
    </location>
    <ligand>
        <name>substrate</name>
    </ligand>
</feature>
<feature type="site" description="Lowers pKa of active site Cys" evidence="1">
    <location>
        <position position="139"/>
    </location>
</feature>
<gene>
    <name evidence="1" type="primary">lipB</name>
    <name type="ordered locus">ZMO1302</name>
</gene>
<sequence length="216" mass="24589">MSSIEWRVSEGLTDYEYARSEMTKRVADIANQEASEMLWFLQHPPLYTAGSSADRRELLMPDRFPVYPAERGGRYTYHGPGQRIGYLMMDIRKHGNDIRRFVHSIEKWVIESLAEFGVTAYSHPERIGIWVDTPDGEAKIGAIGIRVRRWISFHGFSLNICPDLEHFSGIIPCGISEFGVTSLHALGKKVSMSDVDQALADRFPYFLEALQSKEAF</sequence>
<proteinExistence type="inferred from homology"/>
<evidence type="ECO:0000255" key="1">
    <source>
        <dbReference type="HAMAP-Rule" id="MF_00013"/>
    </source>
</evidence>
<evidence type="ECO:0000255" key="2">
    <source>
        <dbReference type="PROSITE-ProRule" id="PRU01067"/>
    </source>
</evidence>
<organism>
    <name type="scientific">Zymomonas mobilis subsp. mobilis (strain ATCC 31821 / ZM4 / CP4)</name>
    <dbReference type="NCBI Taxonomy" id="264203"/>
    <lineage>
        <taxon>Bacteria</taxon>
        <taxon>Pseudomonadati</taxon>
        <taxon>Pseudomonadota</taxon>
        <taxon>Alphaproteobacteria</taxon>
        <taxon>Sphingomonadales</taxon>
        <taxon>Zymomonadaceae</taxon>
        <taxon>Zymomonas</taxon>
    </lineage>
</organism>
<accession>Q5NMY4</accession>